<dbReference type="EMBL" id="AF001212">
    <property type="protein sequence ID" value="AAB58732.1"/>
    <property type="molecule type" value="mRNA"/>
</dbReference>
<dbReference type="EMBL" id="AB003102">
    <property type="protein sequence ID" value="BAA19748.1"/>
    <property type="molecule type" value="mRNA"/>
</dbReference>
<dbReference type="EMBL" id="AK290602">
    <property type="protein sequence ID" value="BAF83291.1"/>
    <property type="molecule type" value="mRNA"/>
</dbReference>
<dbReference type="EMBL" id="AK223196">
    <property type="protein sequence ID" value="BAD96916.1"/>
    <property type="molecule type" value="mRNA"/>
</dbReference>
<dbReference type="EMBL" id="CH471147">
    <property type="protein sequence ID" value="EAW80229.1"/>
    <property type="molecule type" value="Genomic_DNA"/>
</dbReference>
<dbReference type="EMBL" id="CH471147">
    <property type="protein sequence ID" value="EAW80230.1"/>
    <property type="molecule type" value="Genomic_DNA"/>
</dbReference>
<dbReference type="EMBL" id="BC000437">
    <property type="protein sequence ID" value="AAH00437.1"/>
    <property type="molecule type" value="mRNA"/>
</dbReference>
<dbReference type="EMBL" id="BC004430">
    <property type="protein sequence ID" value="AAH04430.1"/>
    <property type="molecule type" value="mRNA"/>
</dbReference>
<dbReference type="CCDS" id="CCDS11272.1">
    <molecule id="O00231-1"/>
</dbReference>
<dbReference type="PIR" id="JC6524">
    <property type="entry name" value="JC6524"/>
</dbReference>
<dbReference type="RefSeq" id="NP_001257411.1">
    <molecule id="O00231-1"/>
    <property type="nucleotide sequence ID" value="NM_001270482.2"/>
</dbReference>
<dbReference type="RefSeq" id="NP_002806.2">
    <molecule id="O00231-1"/>
    <property type="nucleotide sequence ID" value="NM_002815.3"/>
</dbReference>
<dbReference type="PDB" id="5GJQ">
    <property type="method" value="EM"/>
    <property type="resolution" value="4.50 A"/>
    <property type="chains" value="Q=1-422"/>
</dbReference>
<dbReference type="PDB" id="5GJR">
    <property type="method" value="EM"/>
    <property type="resolution" value="3.50 A"/>
    <property type="chains" value="4/Q=1-422"/>
</dbReference>
<dbReference type="PDB" id="5L4K">
    <property type="method" value="EM"/>
    <property type="resolution" value="4.50 A"/>
    <property type="chains" value="Q=1-422"/>
</dbReference>
<dbReference type="PDB" id="5LN3">
    <property type="method" value="EM"/>
    <property type="resolution" value="6.80 A"/>
    <property type="chains" value="Q=1-422"/>
</dbReference>
<dbReference type="PDB" id="5M32">
    <property type="method" value="EM"/>
    <property type="resolution" value="3.80 A"/>
    <property type="chains" value="l=1-422"/>
</dbReference>
<dbReference type="PDB" id="5T0C">
    <property type="method" value="EM"/>
    <property type="resolution" value="3.80 A"/>
    <property type="chains" value="AX/BX=1-422"/>
</dbReference>
<dbReference type="PDB" id="5T0G">
    <property type="method" value="EM"/>
    <property type="resolution" value="4.40 A"/>
    <property type="chains" value="X=1-422"/>
</dbReference>
<dbReference type="PDB" id="5T0H">
    <property type="method" value="EM"/>
    <property type="resolution" value="6.80 A"/>
    <property type="chains" value="X=1-422"/>
</dbReference>
<dbReference type="PDB" id="5T0I">
    <property type="method" value="EM"/>
    <property type="resolution" value="8.00 A"/>
    <property type="chains" value="X=1-422"/>
</dbReference>
<dbReference type="PDB" id="5T0J">
    <property type="method" value="EM"/>
    <property type="resolution" value="8.00 A"/>
    <property type="chains" value="X=1-422"/>
</dbReference>
<dbReference type="PDB" id="5VFP">
    <property type="method" value="EM"/>
    <property type="resolution" value="4.20 A"/>
    <property type="chains" value="X=43-422"/>
</dbReference>
<dbReference type="PDB" id="5VFQ">
    <property type="method" value="EM"/>
    <property type="resolution" value="4.20 A"/>
    <property type="chains" value="X=43-422"/>
</dbReference>
<dbReference type="PDB" id="5VFR">
    <property type="method" value="EM"/>
    <property type="resolution" value="4.90 A"/>
    <property type="chains" value="X=43-422"/>
</dbReference>
<dbReference type="PDB" id="5VFS">
    <property type="method" value="EM"/>
    <property type="resolution" value="3.60 A"/>
    <property type="chains" value="X=43-422"/>
</dbReference>
<dbReference type="PDB" id="5VFT">
    <property type="method" value="EM"/>
    <property type="resolution" value="7.00 A"/>
    <property type="chains" value="X=43-422"/>
</dbReference>
<dbReference type="PDB" id="5VFU">
    <property type="method" value="EM"/>
    <property type="resolution" value="5.80 A"/>
    <property type="chains" value="X=43-422"/>
</dbReference>
<dbReference type="PDB" id="5VGZ">
    <property type="method" value="EM"/>
    <property type="resolution" value="3.70 A"/>
    <property type="chains" value="X=38-422"/>
</dbReference>
<dbReference type="PDB" id="5VHF">
    <property type="method" value="EM"/>
    <property type="resolution" value="5.70 A"/>
    <property type="chains" value="X=38-422"/>
</dbReference>
<dbReference type="PDB" id="5VHH">
    <property type="method" value="EM"/>
    <property type="resolution" value="6.10 A"/>
    <property type="chains" value="X=38-422"/>
</dbReference>
<dbReference type="PDB" id="5VHI">
    <property type="method" value="EM"/>
    <property type="resolution" value="6.80 A"/>
    <property type="chains" value="X=38-422"/>
</dbReference>
<dbReference type="PDB" id="5VHS">
    <property type="method" value="EM"/>
    <property type="resolution" value="8.80 A"/>
    <property type="chains" value="X=38-422"/>
</dbReference>
<dbReference type="PDB" id="6MSB">
    <property type="method" value="EM"/>
    <property type="resolution" value="3.00 A"/>
    <property type="chains" value="X=1-422"/>
</dbReference>
<dbReference type="PDB" id="6MSD">
    <property type="method" value="EM"/>
    <property type="resolution" value="3.20 A"/>
    <property type="chains" value="X=1-422"/>
</dbReference>
<dbReference type="PDB" id="6MSE">
    <property type="method" value="EM"/>
    <property type="resolution" value="3.30 A"/>
    <property type="chains" value="X=1-422"/>
</dbReference>
<dbReference type="PDB" id="6MSG">
    <property type="method" value="EM"/>
    <property type="resolution" value="3.50 A"/>
    <property type="chains" value="X=1-422"/>
</dbReference>
<dbReference type="PDB" id="6MSH">
    <property type="method" value="EM"/>
    <property type="resolution" value="3.60 A"/>
    <property type="chains" value="X=1-422"/>
</dbReference>
<dbReference type="PDB" id="6MSJ">
    <property type="method" value="EM"/>
    <property type="resolution" value="3.30 A"/>
    <property type="chains" value="X=1-422"/>
</dbReference>
<dbReference type="PDB" id="6MSK">
    <property type="method" value="EM"/>
    <property type="resolution" value="3.20 A"/>
    <property type="chains" value="X=1-422"/>
</dbReference>
<dbReference type="PDB" id="6WJD">
    <property type="method" value="EM"/>
    <property type="resolution" value="4.80 A"/>
    <property type="chains" value="X=1-422"/>
</dbReference>
<dbReference type="PDB" id="6WJN">
    <property type="method" value="EM"/>
    <property type="resolution" value="5.70 A"/>
    <property type="chains" value="X=43-422"/>
</dbReference>
<dbReference type="PDB" id="7QXN">
    <property type="method" value="EM"/>
    <property type="resolution" value="3.70 A"/>
    <property type="chains" value="X=1-422"/>
</dbReference>
<dbReference type="PDB" id="7QXP">
    <property type="method" value="EM"/>
    <property type="resolution" value="3.60 A"/>
    <property type="chains" value="X=1-422"/>
</dbReference>
<dbReference type="PDB" id="7QXU">
    <property type="method" value="EM"/>
    <property type="resolution" value="4.30 A"/>
    <property type="chains" value="X=1-422"/>
</dbReference>
<dbReference type="PDB" id="7QXW">
    <property type="method" value="EM"/>
    <property type="resolution" value="4.10 A"/>
    <property type="chains" value="X=1-422"/>
</dbReference>
<dbReference type="PDB" id="7QXX">
    <property type="method" value="EM"/>
    <property type="resolution" value="4.40 A"/>
    <property type="chains" value="X=1-422"/>
</dbReference>
<dbReference type="PDB" id="7QY7">
    <property type="method" value="EM"/>
    <property type="resolution" value="4.70 A"/>
    <property type="chains" value="X=1-422"/>
</dbReference>
<dbReference type="PDB" id="7QYA">
    <property type="method" value="EM"/>
    <property type="resolution" value="4.80 A"/>
    <property type="chains" value="X=1-422"/>
</dbReference>
<dbReference type="PDB" id="7QYB">
    <property type="method" value="EM"/>
    <property type="resolution" value="4.10 A"/>
    <property type="chains" value="X=1-422"/>
</dbReference>
<dbReference type="PDB" id="7W37">
    <property type="method" value="EM"/>
    <property type="resolution" value="3.00 A"/>
    <property type="chains" value="X=1-422"/>
</dbReference>
<dbReference type="PDB" id="7W38">
    <property type="method" value="EM"/>
    <property type="resolution" value="3.10 A"/>
    <property type="chains" value="X=1-422"/>
</dbReference>
<dbReference type="PDB" id="7W39">
    <property type="method" value="EM"/>
    <property type="resolution" value="3.20 A"/>
    <property type="chains" value="X=1-422"/>
</dbReference>
<dbReference type="PDB" id="7W3A">
    <property type="method" value="EM"/>
    <property type="resolution" value="3.50 A"/>
    <property type="chains" value="X=1-422"/>
</dbReference>
<dbReference type="PDB" id="7W3B">
    <property type="method" value="EM"/>
    <property type="resolution" value="3.60 A"/>
    <property type="chains" value="X=1-422"/>
</dbReference>
<dbReference type="PDB" id="7W3C">
    <property type="method" value="EM"/>
    <property type="resolution" value="3.40 A"/>
    <property type="chains" value="X=1-422"/>
</dbReference>
<dbReference type="PDB" id="7W3F">
    <property type="method" value="EM"/>
    <property type="resolution" value="3.30 A"/>
    <property type="chains" value="X=1-422"/>
</dbReference>
<dbReference type="PDB" id="7W3G">
    <property type="method" value="EM"/>
    <property type="resolution" value="3.20 A"/>
    <property type="chains" value="X=1-422"/>
</dbReference>
<dbReference type="PDB" id="7W3H">
    <property type="method" value="EM"/>
    <property type="resolution" value="3.20 A"/>
    <property type="chains" value="X=1-422"/>
</dbReference>
<dbReference type="PDB" id="7W3I">
    <property type="method" value="EM"/>
    <property type="resolution" value="3.50 A"/>
    <property type="chains" value="X=1-422"/>
</dbReference>
<dbReference type="PDB" id="7W3J">
    <property type="method" value="EM"/>
    <property type="resolution" value="3.50 A"/>
    <property type="chains" value="X=1-422"/>
</dbReference>
<dbReference type="PDB" id="7W3K">
    <property type="method" value="EM"/>
    <property type="resolution" value="3.60 A"/>
    <property type="chains" value="X=1-422"/>
</dbReference>
<dbReference type="PDB" id="7W3M">
    <property type="method" value="EM"/>
    <property type="resolution" value="3.50 A"/>
    <property type="chains" value="X=1-422"/>
</dbReference>
<dbReference type="PDB" id="8CVT">
    <property type="method" value="EM"/>
    <property type="resolution" value="3.00 A"/>
    <property type="chains" value="X=1-422"/>
</dbReference>
<dbReference type="PDB" id="8JRI">
    <property type="method" value="EM"/>
    <property type="resolution" value="3.40 A"/>
    <property type="chains" value="X=1-422"/>
</dbReference>
<dbReference type="PDB" id="8JRT">
    <property type="method" value="EM"/>
    <property type="resolution" value="3.60 A"/>
    <property type="chains" value="X=1-422"/>
</dbReference>
<dbReference type="PDB" id="8JTI">
    <property type="method" value="EM"/>
    <property type="resolution" value="3.80 A"/>
    <property type="chains" value="X=1-422"/>
</dbReference>
<dbReference type="PDB" id="8K0G">
    <property type="method" value="EM"/>
    <property type="resolution" value="3.80 A"/>
    <property type="chains" value="X=1-422"/>
</dbReference>
<dbReference type="PDB" id="8USB">
    <property type="method" value="EM"/>
    <property type="resolution" value="2.73 A"/>
    <property type="chains" value="X=1-422"/>
</dbReference>
<dbReference type="PDB" id="8USC">
    <property type="method" value="EM"/>
    <property type="resolution" value="3.10 A"/>
    <property type="chains" value="X=1-422"/>
</dbReference>
<dbReference type="PDB" id="9E8G">
    <property type="method" value="EM"/>
    <property type="resolution" value="3.01 A"/>
    <property type="chains" value="X=1-422"/>
</dbReference>
<dbReference type="PDB" id="9E8H">
    <property type="method" value="EM"/>
    <property type="resolution" value="2.90 A"/>
    <property type="chains" value="X=1-422"/>
</dbReference>
<dbReference type="PDB" id="9E8I">
    <property type="method" value="EM"/>
    <property type="resolution" value="2.87 A"/>
    <property type="chains" value="X=1-422"/>
</dbReference>
<dbReference type="PDB" id="9E8J">
    <property type="method" value="EM"/>
    <property type="resolution" value="3.47 A"/>
    <property type="chains" value="X=1-422"/>
</dbReference>
<dbReference type="PDB" id="9E8K">
    <property type="method" value="EM"/>
    <property type="resolution" value="4.08 A"/>
    <property type="chains" value="X=1-422"/>
</dbReference>
<dbReference type="PDB" id="9E8L">
    <property type="method" value="EM"/>
    <property type="resolution" value="3.59 A"/>
    <property type="chains" value="X=1-422"/>
</dbReference>
<dbReference type="PDB" id="9E8N">
    <property type="method" value="EM"/>
    <property type="resolution" value="3.62 A"/>
    <property type="chains" value="X=1-422"/>
</dbReference>
<dbReference type="PDB" id="9E8O">
    <property type="method" value="EM"/>
    <property type="resolution" value="3.10 A"/>
    <property type="chains" value="X=1-422"/>
</dbReference>
<dbReference type="PDB" id="9E8Q">
    <property type="method" value="EM"/>
    <property type="resolution" value="3.16 A"/>
    <property type="chains" value="X=1-422"/>
</dbReference>
<dbReference type="PDBsum" id="5GJQ"/>
<dbReference type="PDBsum" id="5GJR"/>
<dbReference type="PDBsum" id="5L4K"/>
<dbReference type="PDBsum" id="5LN3"/>
<dbReference type="PDBsum" id="5M32"/>
<dbReference type="PDBsum" id="5T0C"/>
<dbReference type="PDBsum" id="5T0G"/>
<dbReference type="PDBsum" id="5T0H"/>
<dbReference type="PDBsum" id="5T0I"/>
<dbReference type="PDBsum" id="5T0J"/>
<dbReference type="PDBsum" id="5VFP"/>
<dbReference type="PDBsum" id="5VFQ"/>
<dbReference type="PDBsum" id="5VFR"/>
<dbReference type="PDBsum" id="5VFS"/>
<dbReference type="PDBsum" id="5VFT"/>
<dbReference type="PDBsum" id="5VFU"/>
<dbReference type="PDBsum" id="5VGZ"/>
<dbReference type="PDBsum" id="5VHF"/>
<dbReference type="PDBsum" id="5VHH"/>
<dbReference type="PDBsum" id="5VHI"/>
<dbReference type="PDBsum" id="5VHS"/>
<dbReference type="PDBsum" id="6MSB"/>
<dbReference type="PDBsum" id="6MSD"/>
<dbReference type="PDBsum" id="6MSE"/>
<dbReference type="PDBsum" id="6MSG"/>
<dbReference type="PDBsum" id="6MSH"/>
<dbReference type="PDBsum" id="6MSJ"/>
<dbReference type="PDBsum" id="6MSK"/>
<dbReference type="PDBsum" id="6WJD"/>
<dbReference type="PDBsum" id="6WJN"/>
<dbReference type="PDBsum" id="7QXN"/>
<dbReference type="PDBsum" id="7QXP"/>
<dbReference type="PDBsum" id="7QXU"/>
<dbReference type="PDBsum" id="7QXW"/>
<dbReference type="PDBsum" id="7QXX"/>
<dbReference type="PDBsum" id="7QY7"/>
<dbReference type="PDBsum" id="7QYA"/>
<dbReference type="PDBsum" id="7QYB"/>
<dbReference type="PDBsum" id="7W37"/>
<dbReference type="PDBsum" id="7W38"/>
<dbReference type="PDBsum" id="7W39"/>
<dbReference type="PDBsum" id="7W3A"/>
<dbReference type="PDBsum" id="7W3B"/>
<dbReference type="PDBsum" id="7W3C"/>
<dbReference type="PDBsum" id="7W3F"/>
<dbReference type="PDBsum" id="7W3G"/>
<dbReference type="PDBsum" id="7W3H"/>
<dbReference type="PDBsum" id="7W3I"/>
<dbReference type="PDBsum" id="7W3J"/>
<dbReference type="PDBsum" id="7W3K"/>
<dbReference type="PDBsum" id="7W3M"/>
<dbReference type="PDBsum" id="8CVT"/>
<dbReference type="PDBsum" id="8JRI"/>
<dbReference type="PDBsum" id="8JRT"/>
<dbReference type="PDBsum" id="8JTI"/>
<dbReference type="PDBsum" id="8K0G"/>
<dbReference type="PDBsum" id="8USB"/>
<dbReference type="PDBsum" id="8USC"/>
<dbReference type="PDBsum" id="9E8G"/>
<dbReference type="PDBsum" id="9E8H"/>
<dbReference type="PDBsum" id="9E8I"/>
<dbReference type="PDBsum" id="9E8J"/>
<dbReference type="PDBsum" id="9E8K"/>
<dbReference type="PDBsum" id="9E8L"/>
<dbReference type="PDBsum" id="9E8N"/>
<dbReference type="PDBsum" id="9E8O"/>
<dbReference type="PDBsum" id="9E8Q"/>
<dbReference type="EMDB" id="EMD-14201"/>
<dbReference type="EMDB" id="EMD-14202"/>
<dbReference type="EMDB" id="EMD-14203"/>
<dbReference type="EMDB" id="EMD-14204"/>
<dbReference type="EMDB" id="EMD-14205"/>
<dbReference type="EMDB" id="EMD-14209"/>
<dbReference type="EMDB" id="EMD-14210"/>
<dbReference type="EMDB" id="EMD-14211"/>
<dbReference type="EMDB" id="EMD-21691"/>
<dbReference type="EMDB" id="EMD-21696"/>
<dbReference type="EMDB" id="EMD-27018"/>
<dbReference type="EMDB" id="EMD-32272"/>
<dbReference type="EMDB" id="EMD-32273"/>
<dbReference type="EMDB" id="EMD-32274"/>
<dbReference type="EMDB" id="EMD-32275"/>
<dbReference type="EMDB" id="EMD-32276"/>
<dbReference type="EMDB" id="EMD-32277"/>
<dbReference type="EMDB" id="EMD-32278"/>
<dbReference type="EMDB" id="EMD-32279"/>
<dbReference type="EMDB" id="EMD-32280"/>
<dbReference type="EMDB" id="EMD-32281"/>
<dbReference type="EMDB" id="EMD-32282"/>
<dbReference type="EMDB" id="EMD-32283"/>
<dbReference type="EMDB" id="EMD-32284"/>
<dbReference type="EMDB" id="EMD-36598"/>
<dbReference type="EMDB" id="EMD-36605"/>
<dbReference type="EMDB" id="EMD-36645"/>
<dbReference type="EMDB" id="EMD-36764"/>
<dbReference type="EMDB" id="EMD-4089"/>
<dbReference type="EMDB" id="EMD-4146"/>
<dbReference type="EMDB" id="EMD-42506"/>
<dbReference type="EMDB" id="EMD-42507"/>
<dbReference type="EMDB" id="EMD-47719"/>
<dbReference type="EMDB" id="EMD-47720"/>
<dbReference type="EMDB" id="EMD-47721"/>
<dbReference type="EMDB" id="EMD-47722"/>
<dbReference type="EMDB" id="EMD-47723"/>
<dbReference type="EMDB" id="EMD-47724"/>
<dbReference type="EMDB" id="EMD-47725"/>
<dbReference type="EMDB" id="EMD-47726"/>
<dbReference type="EMDB" id="EMD-47727"/>
<dbReference type="EMDB" id="EMD-60138"/>
<dbReference type="EMDB" id="EMD-60139"/>
<dbReference type="EMDB" id="EMD-8663"/>
<dbReference type="EMDB" id="EMD-8664"/>
<dbReference type="EMDB" id="EMD-8665"/>
<dbReference type="EMDB" id="EMD-8666"/>
<dbReference type="EMDB" id="EMD-8667"/>
<dbReference type="EMDB" id="EMD-8668"/>
<dbReference type="EMDB" id="EMD-8672"/>
<dbReference type="EMDB" id="EMD-8674"/>
<dbReference type="EMDB" id="EMD-8675"/>
<dbReference type="EMDB" id="EMD-8676"/>
<dbReference type="EMDB" id="EMD-8684"/>
<dbReference type="EMDB" id="EMD-9216"/>
<dbReference type="EMDB" id="EMD-9217"/>
<dbReference type="EMDB" id="EMD-9218"/>
<dbReference type="EMDB" id="EMD-9219"/>
<dbReference type="EMDB" id="EMD-9220"/>
<dbReference type="EMDB" id="EMD-9221"/>
<dbReference type="EMDB" id="EMD-9222"/>
<dbReference type="EMDB" id="EMD-9511"/>
<dbReference type="EMDB" id="EMD-9512"/>
<dbReference type="SMR" id="O00231"/>
<dbReference type="BioGRID" id="111689">
    <property type="interactions" value="366"/>
</dbReference>
<dbReference type="ComplexPortal" id="CPX-5993">
    <property type="entry name" value="26S proteasome complex"/>
</dbReference>
<dbReference type="ComplexPortal" id="CPX-8964">
    <property type="entry name" value="19S proteasome regulatory complex"/>
</dbReference>
<dbReference type="ComplexPortal" id="CPX-9082">
    <property type="entry name" value="19S-20S-PA28-alphabeta hybrid proteasome complex"/>
</dbReference>
<dbReference type="ComplexPortal" id="CPX-9085">
    <property type="entry name" value="19S-20S-PA28-gamma hybrid proteasome complex"/>
</dbReference>
<dbReference type="ComplexPortal" id="CPX-9086">
    <property type="entry name" value="30S proteasome complex"/>
</dbReference>
<dbReference type="CORUM" id="O00231"/>
<dbReference type="FunCoup" id="O00231">
    <property type="interactions" value="3293"/>
</dbReference>
<dbReference type="IntAct" id="O00231">
    <property type="interactions" value="162"/>
</dbReference>
<dbReference type="MINT" id="O00231"/>
<dbReference type="STRING" id="9606.ENSP00000261712"/>
<dbReference type="BindingDB" id="O00231"/>
<dbReference type="ChEMBL" id="CHEMBL3831212"/>
<dbReference type="GlyGen" id="O00231">
    <property type="glycosylation" value="2 sites, 1 N-linked glycan (1 site), 1 O-linked glycan (1 site)"/>
</dbReference>
<dbReference type="iPTMnet" id="O00231"/>
<dbReference type="MetOSite" id="O00231"/>
<dbReference type="PhosphoSitePlus" id="O00231"/>
<dbReference type="SwissPalm" id="O00231"/>
<dbReference type="BioMuta" id="PSMD11"/>
<dbReference type="OGP" id="O00231"/>
<dbReference type="jPOST" id="O00231"/>
<dbReference type="MassIVE" id="O00231"/>
<dbReference type="PaxDb" id="9606-ENSP00000261712"/>
<dbReference type="PeptideAtlas" id="O00231"/>
<dbReference type="ProteomicsDB" id="47796">
    <molecule id="O00231-1"/>
</dbReference>
<dbReference type="Pumba" id="O00231"/>
<dbReference type="Antibodypedia" id="15394">
    <property type="antibodies" value="320 antibodies from 35 providers"/>
</dbReference>
<dbReference type="DNASU" id="5717"/>
<dbReference type="Ensembl" id="ENST00000261712.8">
    <molecule id="O00231-1"/>
    <property type="protein sequence ID" value="ENSP00000261712.3"/>
    <property type="gene ID" value="ENSG00000108671.11"/>
</dbReference>
<dbReference type="Ensembl" id="ENST00000457654.6">
    <molecule id="O00231-1"/>
    <property type="protein sequence ID" value="ENSP00000393185.2"/>
    <property type="gene ID" value="ENSG00000108671.11"/>
</dbReference>
<dbReference type="Ensembl" id="ENST00000649012.1">
    <molecule id="O00231-1"/>
    <property type="protein sequence ID" value="ENSP00000497128.1"/>
    <property type="gene ID" value="ENSG00000108671.11"/>
</dbReference>
<dbReference type="GeneID" id="5717"/>
<dbReference type="KEGG" id="hsa:5717"/>
<dbReference type="MANE-Select" id="ENST00000261712.8">
    <property type="protein sequence ID" value="ENSP00000261712.3"/>
    <property type="RefSeq nucleotide sequence ID" value="NM_002815.4"/>
    <property type="RefSeq protein sequence ID" value="NP_002806.2"/>
</dbReference>
<dbReference type="UCSC" id="uc002hhm.5">
    <molecule id="O00231-1"/>
    <property type="organism name" value="human"/>
</dbReference>
<dbReference type="AGR" id="HGNC:9556"/>
<dbReference type="CTD" id="5717"/>
<dbReference type="DisGeNET" id="5717"/>
<dbReference type="GeneCards" id="PSMD11"/>
<dbReference type="HGNC" id="HGNC:9556">
    <property type="gene designation" value="PSMD11"/>
</dbReference>
<dbReference type="HPA" id="ENSG00000108671">
    <property type="expression patterns" value="Low tissue specificity"/>
</dbReference>
<dbReference type="MIM" id="604449">
    <property type="type" value="gene"/>
</dbReference>
<dbReference type="neXtProt" id="NX_O00231"/>
<dbReference type="OpenTargets" id="ENSG00000108671"/>
<dbReference type="PharmGKB" id="PA33902"/>
<dbReference type="VEuPathDB" id="HostDB:ENSG00000108671"/>
<dbReference type="eggNOG" id="KOG1463">
    <property type="taxonomic scope" value="Eukaryota"/>
</dbReference>
<dbReference type="GeneTree" id="ENSGT00530000063301"/>
<dbReference type="HOGENOM" id="CLU_029573_2_1_1"/>
<dbReference type="InParanoid" id="O00231"/>
<dbReference type="OMA" id="ESKIYHA"/>
<dbReference type="OrthoDB" id="1418352at2759"/>
<dbReference type="PAN-GO" id="O00231">
    <property type="GO annotations" value="3 GO annotations based on evolutionary models"/>
</dbReference>
<dbReference type="PhylomeDB" id="O00231"/>
<dbReference type="TreeFam" id="TF106230"/>
<dbReference type="PathwayCommons" id="O00231"/>
<dbReference type="Reactome" id="R-HSA-1169091">
    <property type="pathway name" value="Activation of NF-kappaB in B cells"/>
</dbReference>
<dbReference type="Reactome" id="R-HSA-1234176">
    <property type="pathway name" value="Oxygen-dependent proline hydroxylation of Hypoxia-inducible Factor Alpha"/>
</dbReference>
<dbReference type="Reactome" id="R-HSA-1236974">
    <property type="pathway name" value="ER-Phagosome pathway"/>
</dbReference>
<dbReference type="Reactome" id="R-HSA-1236978">
    <property type="pathway name" value="Cross-presentation of soluble exogenous antigens (endosomes)"/>
</dbReference>
<dbReference type="Reactome" id="R-HSA-174084">
    <property type="pathway name" value="Autodegradation of Cdh1 by Cdh1:APC/C"/>
</dbReference>
<dbReference type="Reactome" id="R-HSA-174113">
    <property type="pathway name" value="SCF-beta-TrCP mediated degradation of Emi1"/>
</dbReference>
<dbReference type="Reactome" id="R-HSA-174154">
    <property type="pathway name" value="APC/C:Cdc20 mediated degradation of Securin"/>
</dbReference>
<dbReference type="Reactome" id="R-HSA-174178">
    <property type="pathway name" value="APC/C:Cdh1 mediated degradation of Cdc20 and other APC/C:Cdh1 targeted proteins in late mitosis/early G1"/>
</dbReference>
<dbReference type="Reactome" id="R-HSA-174184">
    <property type="pathway name" value="Cdc20:Phospho-APC/C mediated degradation of Cyclin A"/>
</dbReference>
<dbReference type="Reactome" id="R-HSA-180534">
    <property type="pathway name" value="Vpu mediated degradation of CD4"/>
</dbReference>
<dbReference type="Reactome" id="R-HSA-180585">
    <property type="pathway name" value="Vif-mediated degradation of APOBEC3G"/>
</dbReference>
<dbReference type="Reactome" id="R-HSA-187577">
    <property type="pathway name" value="SCF(Skp2)-mediated degradation of p27/p21"/>
</dbReference>
<dbReference type="Reactome" id="R-HSA-195253">
    <property type="pathway name" value="Degradation of beta-catenin by the destruction complex"/>
</dbReference>
<dbReference type="Reactome" id="R-HSA-202424">
    <property type="pathway name" value="Downstream TCR signaling"/>
</dbReference>
<dbReference type="Reactome" id="R-HSA-211733">
    <property type="pathway name" value="Regulation of activated PAK-2p34 by proteasome mediated degradation"/>
</dbReference>
<dbReference type="Reactome" id="R-HSA-2467813">
    <property type="pathway name" value="Separation of Sister Chromatids"/>
</dbReference>
<dbReference type="Reactome" id="R-HSA-2871837">
    <property type="pathway name" value="FCERI mediated NF-kB activation"/>
</dbReference>
<dbReference type="Reactome" id="R-HSA-349425">
    <property type="pathway name" value="Autodegradation of the E3 ubiquitin ligase COP1"/>
</dbReference>
<dbReference type="Reactome" id="R-HSA-350562">
    <property type="pathway name" value="Regulation of ornithine decarboxylase (ODC)"/>
</dbReference>
<dbReference type="Reactome" id="R-HSA-382556">
    <property type="pathway name" value="ABC-family proteins mediated transport"/>
</dbReference>
<dbReference type="Reactome" id="R-HSA-450408">
    <property type="pathway name" value="AUF1 (hnRNP D0) binds and destabilizes mRNA"/>
</dbReference>
<dbReference type="Reactome" id="R-HSA-4608870">
    <property type="pathway name" value="Asymmetric localization of PCP proteins"/>
</dbReference>
<dbReference type="Reactome" id="R-HSA-4641257">
    <property type="pathway name" value="Degradation of AXIN"/>
</dbReference>
<dbReference type="Reactome" id="R-HSA-4641258">
    <property type="pathway name" value="Degradation of DVL"/>
</dbReference>
<dbReference type="Reactome" id="R-HSA-5358346">
    <property type="pathway name" value="Hedgehog ligand biogenesis"/>
</dbReference>
<dbReference type="Reactome" id="R-HSA-5362768">
    <property type="pathway name" value="Hh mutants are degraded by ERAD"/>
</dbReference>
<dbReference type="Reactome" id="R-HSA-5607761">
    <property type="pathway name" value="Dectin-1 mediated noncanonical NF-kB signaling"/>
</dbReference>
<dbReference type="Reactome" id="R-HSA-5607764">
    <property type="pathway name" value="CLEC7A (Dectin-1) signaling"/>
</dbReference>
<dbReference type="Reactome" id="R-HSA-5610780">
    <property type="pathway name" value="Degradation of GLI1 by the proteasome"/>
</dbReference>
<dbReference type="Reactome" id="R-HSA-5610783">
    <property type="pathway name" value="Degradation of GLI2 by the proteasome"/>
</dbReference>
<dbReference type="Reactome" id="R-HSA-5610785">
    <property type="pathway name" value="GLI3 is processed to GLI3R by the proteasome"/>
</dbReference>
<dbReference type="Reactome" id="R-HSA-5632684">
    <property type="pathway name" value="Hedgehog 'on' state"/>
</dbReference>
<dbReference type="Reactome" id="R-HSA-5658442">
    <property type="pathway name" value="Regulation of RAS by GAPs"/>
</dbReference>
<dbReference type="Reactome" id="R-HSA-5668541">
    <property type="pathway name" value="TNFR2 non-canonical NF-kB pathway"/>
</dbReference>
<dbReference type="Reactome" id="R-HSA-5676590">
    <property type="pathway name" value="NIK--&gt;noncanonical NF-kB signaling"/>
</dbReference>
<dbReference type="Reactome" id="R-HSA-5678895">
    <property type="pathway name" value="Defective CFTR causes cystic fibrosis"/>
</dbReference>
<dbReference type="Reactome" id="R-HSA-5687128">
    <property type="pathway name" value="MAPK6/MAPK4 signaling"/>
</dbReference>
<dbReference type="Reactome" id="R-HSA-5689603">
    <property type="pathway name" value="UCH proteinases"/>
</dbReference>
<dbReference type="Reactome" id="R-HSA-5689880">
    <property type="pathway name" value="Ub-specific processing proteases"/>
</dbReference>
<dbReference type="Reactome" id="R-HSA-6798695">
    <property type="pathway name" value="Neutrophil degranulation"/>
</dbReference>
<dbReference type="Reactome" id="R-HSA-68867">
    <property type="pathway name" value="Assembly of the pre-replicative complex"/>
</dbReference>
<dbReference type="Reactome" id="R-HSA-68949">
    <property type="pathway name" value="Orc1 removal from chromatin"/>
</dbReference>
<dbReference type="Reactome" id="R-HSA-69017">
    <property type="pathway name" value="CDK-mediated phosphorylation and removal of Cdc6"/>
</dbReference>
<dbReference type="Reactome" id="R-HSA-69481">
    <property type="pathway name" value="G2/M Checkpoints"/>
</dbReference>
<dbReference type="Reactome" id="R-HSA-69601">
    <property type="pathway name" value="Ubiquitin Mediated Degradation of Phosphorylated Cdc25A"/>
</dbReference>
<dbReference type="Reactome" id="R-HSA-75815">
    <property type="pathway name" value="Ubiquitin-dependent degradation of Cyclin D"/>
</dbReference>
<dbReference type="Reactome" id="R-HSA-8852276">
    <property type="pathway name" value="The role of GTSE1 in G2/M progression after G2 checkpoint"/>
</dbReference>
<dbReference type="Reactome" id="R-HSA-8854050">
    <property type="pathway name" value="FBXL7 down-regulates AURKA during mitotic entry and in early mitosis"/>
</dbReference>
<dbReference type="Reactome" id="R-HSA-8939236">
    <property type="pathway name" value="RUNX1 regulates transcription of genes involved in differentiation of HSCs"/>
</dbReference>
<dbReference type="Reactome" id="R-HSA-8939902">
    <property type="pathway name" value="Regulation of RUNX2 expression and activity"/>
</dbReference>
<dbReference type="Reactome" id="R-HSA-8941858">
    <property type="pathway name" value="Regulation of RUNX3 expression and activity"/>
</dbReference>
<dbReference type="Reactome" id="R-HSA-8948751">
    <property type="pathway name" value="Regulation of PTEN stability and activity"/>
</dbReference>
<dbReference type="Reactome" id="R-HSA-8951664">
    <property type="pathway name" value="Neddylation"/>
</dbReference>
<dbReference type="Reactome" id="R-HSA-9010553">
    <property type="pathway name" value="Regulation of expression of SLITs and ROBOs"/>
</dbReference>
<dbReference type="Reactome" id="R-HSA-9020702">
    <property type="pathway name" value="Interleukin-1 signaling"/>
</dbReference>
<dbReference type="Reactome" id="R-HSA-9604323">
    <property type="pathway name" value="Negative regulation of NOTCH4 signaling"/>
</dbReference>
<dbReference type="Reactome" id="R-HSA-9755511">
    <property type="pathway name" value="KEAP1-NFE2L2 pathway"/>
</dbReference>
<dbReference type="Reactome" id="R-HSA-9762114">
    <property type="pathway name" value="GSK3B and BTRC:CUL1-mediated-degradation of NFE2L2"/>
</dbReference>
<dbReference type="Reactome" id="R-HSA-9824272">
    <property type="pathway name" value="Somitogenesis"/>
</dbReference>
<dbReference type="Reactome" id="R-HSA-983168">
    <property type="pathway name" value="Antigen processing: Ubiquitination &amp; Proteasome degradation"/>
</dbReference>
<dbReference type="Reactome" id="R-HSA-9907900">
    <property type="pathway name" value="Proteasome assembly"/>
</dbReference>
<dbReference type="SignaLink" id="O00231"/>
<dbReference type="SIGNOR" id="O00231"/>
<dbReference type="BioGRID-ORCS" id="5717">
    <property type="hits" value="775 hits in 1132 CRISPR screens"/>
</dbReference>
<dbReference type="CD-CODE" id="FB4E32DD">
    <property type="entry name" value="Presynaptic clusters and postsynaptic densities"/>
</dbReference>
<dbReference type="ChiTaRS" id="PSMD11">
    <property type="organism name" value="human"/>
</dbReference>
<dbReference type="GeneWiki" id="PSMD11"/>
<dbReference type="GenomeRNAi" id="5717"/>
<dbReference type="Pharos" id="O00231">
    <property type="development level" value="Tbio"/>
</dbReference>
<dbReference type="PRO" id="PR:O00231"/>
<dbReference type="Proteomes" id="UP000005640">
    <property type="component" value="Chromosome 17"/>
</dbReference>
<dbReference type="RNAct" id="O00231">
    <property type="molecule type" value="protein"/>
</dbReference>
<dbReference type="Bgee" id="ENSG00000108671">
    <property type="expression patterns" value="Expressed in oocyte and 203 other cell types or tissues"/>
</dbReference>
<dbReference type="ExpressionAtlas" id="O00231">
    <property type="expression patterns" value="baseline and differential"/>
</dbReference>
<dbReference type="GO" id="GO:0005829">
    <property type="term" value="C:cytosol"/>
    <property type="evidence" value="ECO:0000304"/>
    <property type="project" value="Reactome"/>
</dbReference>
<dbReference type="GO" id="GO:0005576">
    <property type="term" value="C:extracellular region"/>
    <property type="evidence" value="ECO:0000304"/>
    <property type="project" value="Reactome"/>
</dbReference>
<dbReference type="GO" id="GO:1904813">
    <property type="term" value="C:ficolin-1-rich granule lumen"/>
    <property type="evidence" value="ECO:0000304"/>
    <property type="project" value="Reactome"/>
</dbReference>
<dbReference type="GO" id="GO:0016020">
    <property type="term" value="C:membrane"/>
    <property type="evidence" value="ECO:0007005"/>
    <property type="project" value="UniProtKB"/>
</dbReference>
<dbReference type="GO" id="GO:0005654">
    <property type="term" value="C:nucleoplasm"/>
    <property type="evidence" value="ECO:0000304"/>
    <property type="project" value="Reactome"/>
</dbReference>
<dbReference type="GO" id="GO:0005634">
    <property type="term" value="C:nucleus"/>
    <property type="evidence" value="ECO:0007005"/>
    <property type="project" value="UniProtKB"/>
</dbReference>
<dbReference type="GO" id="GO:0022624">
    <property type="term" value="C:proteasome accessory complex"/>
    <property type="evidence" value="ECO:0000314"/>
    <property type="project" value="UniProtKB"/>
</dbReference>
<dbReference type="GO" id="GO:0000502">
    <property type="term" value="C:proteasome complex"/>
    <property type="evidence" value="ECO:0000314"/>
    <property type="project" value="UniProtKB"/>
</dbReference>
<dbReference type="GO" id="GO:0008541">
    <property type="term" value="C:proteasome regulatory particle, lid subcomplex"/>
    <property type="evidence" value="ECO:0000318"/>
    <property type="project" value="GO_Central"/>
</dbReference>
<dbReference type="GO" id="GO:0034774">
    <property type="term" value="C:secretory granule lumen"/>
    <property type="evidence" value="ECO:0000304"/>
    <property type="project" value="Reactome"/>
</dbReference>
<dbReference type="GO" id="GO:0005198">
    <property type="term" value="F:structural molecule activity"/>
    <property type="evidence" value="ECO:0000318"/>
    <property type="project" value="GO_Central"/>
</dbReference>
<dbReference type="GO" id="GO:0043248">
    <property type="term" value="P:proteasome assembly"/>
    <property type="evidence" value="ECO:0000315"/>
    <property type="project" value="UniProtKB"/>
</dbReference>
<dbReference type="GO" id="GO:0043161">
    <property type="term" value="P:proteasome-mediated ubiquitin-dependent protein catabolic process"/>
    <property type="evidence" value="ECO:0000303"/>
    <property type="project" value="ComplexPortal"/>
</dbReference>
<dbReference type="GO" id="GO:0048863">
    <property type="term" value="P:stem cell differentiation"/>
    <property type="evidence" value="ECO:0000315"/>
    <property type="project" value="UniProtKB"/>
</dbReference>
<dbReference type="GO" id="GO:0006511">
    <property type="term" value="P:ubiquitin-dependent protein catabolic process"/>
    <property type="evidence" value="ECO:0000315"/>
    <property type="project" value="UniProtKB"/>
</dbReference>
<dbReference type="FunFam" id="1.25.40.570:FF:000003">
    <property type="entry name" value="26S proteasome non-ATPase regulatory subunit 11"/>
    <property type="match status" value="1"/>
</dbReference>
<dbReference type="Gene3D" id="1.25.40.570">
    <property type="match status" value="1"/>
</dbReference>
<dbReference type="InterPro" id="IPR050871">
    <property type="entry name" value="26S_Proteasome/COP9_Components"/>
</dbReference>
<dbReference type="InterPro" id="IPR000717">
    <property type="entry name" value="PCI_dom"/>
</dbReference>
<dbReference type="InterPro" id="IPR040780">
    <property type="entry name" value="Rpn6_C_helix"/>
</dbReference>
<dbReference type="InterPro" id="IPR040773">
    <property type="entry name" value="Rpn6_N"/>
</dbReference>
<dbReference type="InterPro" id="IPR011990">
    <property type="entry name" value="TPR-like_helical_dom_sf"/>
</dbReference>
<dbReference type="InterPro" id="IPR036390">
    <property type="entry name" value="WH_DNA-bd_sf"/>
</dbReference>
<dbReference type="PANTHER" id="PTHR10678">
    <property type="entry name" value="26S PROTEASOME NON-ATPASE REGULATORY SUBUNIT 11/COP9 SIGNALOSOME COMPLEX SUBUNIT 2"/>
    <property type="match status" value="1"/>
</dbReference>
<dbReference type="Pfam" id="PF01399">
    <property type="entry name" value="PCI"/>
    <property type="match status" value="1"/>
</dbReference>
<dbReference type="Pfam" id="PF18503">
    <property type="entry name" value="RPN6_C_helix"/>
    <property type="match status" value="1"/>
</dbReference>
<dbReference type="Pfam" id="PF18055">
    <property type="entry name" value="RPN6_N"/>
    <property type="match status" value="1"/>
</dbReference>
<dbReference type="SMART" id="SM00753">
    <property type="entry name" value="PAM"/>
    <property type="match status" value="1"/>
</dbReference>
<dbReference type="SMART" id="SM00088">
    <property type="entry name" value="PINT"/>
    <property type="match status" value="1"/>
</dbReference>
<dbReference type="SUPFAM" id="SSF48452">
    <property type="entry name" value="TPR-like"/>
    <property type="match status" value="1"/>
</dbReference>
<dbReference type="SUPFAM" id="SSF46785">
    <property type="entry name" value="Winged helix' DNA-binding domain"/>
    <property type="match status" value="1"/>
</dbReference>
<dbReference type="PROSITE" id="PS50250">
    <property type="entry name" value="PCI"/>
    <property type="match status" value="1"/>
</dbReference>
<gene>
    <name type="primary">PSMD11</name>
</gene>
<feature type="initiator methionine" description="Removed" evidence="3 9 14 15 16">
    <location>
        <position position="1"/>
    </location>
</feature>
<feature type="chain" id="PRO_0000173857" description="26S proteasome non-ATPase regulatory subunit 11">
    <location>
        <begin position="2"/>
        <end position="422"/>
    </location>
</feature>
<feature type="domain" description="PCI" evidence="2">
    <location>
        <begin position="224"/>
        <end position="392"/>
    </location>
</feature>
<feature type="modified residue" description="N-acetylalanine" evidence="9 14 15 16">
    <location>
        <position position="2"/>
    </location>
</feature>
<feature type="modified residue" description="Phosphoserine" evidence="12 13 17 18">
    <location>
        <position position="14"/>
    </location>
</feature>
<feature type="modified residue" description="Phosphoserine" evidence="17">
    <location>
        <position position="23"/>
    </location>
</feature>
<feature type="cross-link" description="Glycyl lysine isopeptide (Lys-Gly) (interchain with G-Cter in SUMO2)" evidence="19 20">
    <location>
        <position position="274"/>
    </location>
</feature>
<feature type="splice variant" id="VSP_044400" description="In isoform 2." evidence="10">
    <original>H</original>
    <variation>HA</variation>
    <location>
        <position position="375"/>
    </location>
</feature>
<feature type="mutagenesis site" description="Does not affect phosphorylation by AMPK; when associated with A-79 and A-272." evidence="5">
    <original>S</original>
    <variation>A</variation>
    <location>
        <position position="14"/>
    </location>
</feature>
<feature type="mutagenesis site" description="Does not affect phosphorylation by AMPK; when associated with A-14 and A-272." evidence="5">
    <original>S</original>
    <variation>A</variation>
    <location>
        <position position="79"/>
    </location>
</feature>
<feature type="mutagenesis site" description="Does not affect phosphorylation by AMPK; when associated with A14- and A-79." evidence="5">
    <original>S</original>
    <variation>A</variation>
    <location>
        <position position="272"/>
    </location>
</feature>
<feature type="sequence conflict" description="In Ref. 1; AAB58732." evidence="11" ref="1">
    <original>C</original>
    <variation>S</variation>
    <location>
        <position position="113"/>
    </location>
</feature>
<feature type="helix" evidence="21">
    <location>
        <begin position="45"/>
        <end position="60"/>
    </location>
</feature>
<feature type="helix" evidence="21">
    <location>
        <begin position="63"/>
        <end position="79"/>
    </location>
</feature>
<feature type="helix" evidence="21">
    <location>
        <begin position="82"/>
        <end position="98"/>
    </location>
</feature>
<feature type="helix" evidence="21">
    <location>
        <begin position="105"/>
        <end position="120"/>
    </location>
</feature>
<feature type="helix" evidence="21">
    <location>
        <begin position="123"/>
        <end position="140"/>
    </location>
</feature>
<feature type="helix" evidence="21">
    <location>
        <begin position="143"/>
        <end position="159"/>
    </location>
</feature>
<feature type="helix" evidence="21">
    <location>
        <begin position="163"/>
        <end position="179"/>
    </location>
</feature>
<feature type="helix" evidence="21">
    <location>
        <begin position="183"/>
        <end position="194"/>
    </location>
</feature>
<feature type="helix" evidence="21">
    <location>
        <begin position="197"/>
        <end position="199"/>
    </location>
</feature>
<feature type="helix" evidence="21">
    <location>
        <begin position="204"/>
        <end position="220"/>
    </location>
</feature>
<feature type="helix" evidence="21">
    <location>
        <begin position="226"/>
        <end position="242"/>
    </location>
</feature>
<feature type="helix" evidence="21">
    <location>
        <begin position="247"/>
        <end position="260"/>
    </location>
</feature>
<feature type="turn" evidence="21">
    <location>
        <begin position="264"/>
        <end position="266"/>
    </location>
</feature>
<feature type="helix" evidence="21">
    <location>
        <begin position="267"/>
        <end position="272"/>
    </location>
</feature>
<feature type="turn" evidence="21">
    <location>
        <begin position="273"/>
        <end position="279"/>
    </location>
</feature>
<feature type="helix" evidence="21">
    <location>
        <begin position="282"/>
        <end position="295"/>
    </location>
</feature>
<feature type="helix" evidence="21">
    <location>
        <begin position="299"/>
        <end position="308"/>
    </location>
</feature>
<feature type="turn" evidence="21">
    <location>
        <begin position="311"/>
        <end position="313"/>
    </location>
</feature>
<feature type="strand" evidence="21">
    <location>
        <begin position="314"/>
        <end position="316"/>
    </location>
</feature>
<feature type="helix" evidence="21">
    <location>
        <begin position="317"/>
        <end position="339"/>
    </location>
</feature>
<feature type="strand" evidence="21">
    <location>
        <begin position="343"/>
        <end position="346"/>
    </location>
</feature>
<feature type="helix" evidence="21">
    <location>
        <begin position="347"/>
        <end position="354"/>
    </location>
</feature>
<feature type="helix" evidence="21">
    <location>
        <begin position="358"/>
        <end position="370"/>
    </location>
</feature>
<feature type="strand" evidence="21">
    <location>
        <begin position="373"/>
        <end position="375"/>
    </location>
</feature>
<feature type="turn" evidence="21">
    <location>
        <begin position="380"/>
        <end position="383"/>
    </location>
</feature>
<feature type="helix" evidence="21">
    <location>
        <begin position="395"/>
        <end position="420"/>
    </location>
</feature>
<name>PSD11_HUMAN</name>
<keyword id="KW-0002">3D-structure</keyword>
<keyword id="KW-0007">Acetylation</keyword>
<keyword id="KW-0025">Alternative splicing</keyword>
<keyword id="KW-0963">Cytoplasm</keyword>
<keyword id="KW-0903">Direct protein sequencing</keyword>
<keyword id="KW-1017">Isopeptide bond</keyword>
<keyword id="KW-0539">Nucleus</keyword>
<keyword id="KW-0597">Phosphoprotein</keyword>
<keyword id="KW-0647">Proteasome</keyword>
<keyword id="KW-1267">Proteomics identification</keyword>
<keyword id="KW-1185">Reference proteome</keyword>
<keyword id="KW-0832">Ubl conjugation</keyword>
<comment type="function">
    <text evidence="4 6">Component of the 26S proteasome, a multiprotein complex involved in the ATP-dependent degradation of ubiquitinated proteins. This complex plays a key role in the maintenance of protein homeostasis by removing misfolded or damaged proteins, which could impair cellular functions, and by removing proteins whose functions are no longer required. Therefore, the proteasome participates in numerous cellular processes, including cell cycle progression, apoptosis, or DNA damage repair. In the complex, PSMD11 is required for proteasome assembly. Plays a key role in increased proteasome activity in embryonic stem cells (ESCs): its high expression in ESCs promotes enhanced assembly of the 26S proteasome, followed by higher proteasome activity.</text>
</comment>
<comment type="subunit">
    <text evidence="6 7 8">Component of the 19S proteasome regulatory particle complex. The 26S proteasome consists of a 20S core particle (CP) and two 19S regulatory subunits (RP). The regulatory particle is made of a lid composed of 9 subunits including PSMD11, a base containing 6 ATPases and few additional components.</text>
</comment>
<comment type="interaction">
    <interactant intactId="EBI-357816">
        <id>O00231</id>
    </interactant>
    <interactant intactId="EBI-1050386">
        <id>P61201</id>
        <label>COPS2</label>
    </interactant>
    <organismsDiffer>false</organismsDiffer>
    <experiments>3</experiments>
</comment>
<comment type="interaction">
    <interactant intactId="EBI-357816">
        <id>O00231</id>
    </interactant>
    <interactant intactId="EBI-1053424">
        <id>O43741</id>
        <label>PRKAB2</label>
    </interactant>
    <organismsDiffer>false</organismsDiffer>
    <experiments>3</experiments>
</comment>
<comment type="interaction">
    <interactant intactId="EBI-357816">
        <id>O00231</id>
    </interactant>
    <interactant intactId="EBI-912440">
        <id>Q96LA8</id>
        <label>PRMT6</label>
    </interactant>
    <organismsDiffer>false</organismsDiffer>
    <experiments>2</experiments>
</comment>
<comment type="interaction">
    <interactant intactId="EBI-357816">
        <id>O00231</id>
    </interactant>
    <interactant intactId="EBI-359318">
        <id>P55036</id>
        <label>PSMD4</label>
    </interactant>
    <organismsDiffer>false</organismsDiffer>
    <experiments>5</experiments>
</comment>
<comment type="subcellular location">
    <subcellularLocation>
        <location evidence="1">Nucleus</location>
    </subcellularLocation>
    <subcellularLocation>
        <location evidence="1">Cytoplasm</location>
        <location evidence="1">Cytosol</location>
    </subcellularLocation>
</comment>
<comment type="alternative products">
    <event type="alternative splicing"/>
    <isoform>
        <id>O00231-1</id>
        <name>1</name>
        <sequence type="displayed"/>
    </isoform>
    <isoform>
        <id>O00231-2</id>
        <name>2</name>
        <sequence type="described" ref="VSP_044400"/>
    </isoform>
</comment>
<comment type="tissue specificity">
    <text evidence="6">Highly expressed in embryonic stem cells (ESCs). Expression decreases as ESCs differentiate.</text>
</comment>
<comment type="induction">
    <text evidence="6">By FOXO4; expression in embryonic stem cells (ESCs) is mediated by FOXO4.</text>
</comment>
<comment type="PTM">
    <text evidence="5">Phosphorylated by AMPK.</text>
</comment>
<comment type="similarity">
    <text evidence="11">Belongs to the proteasome subunit S9 family.</text>
</comment>
<protein>
    <recommendedName>
        <fullName>26S proteasome non-ATPase regulatory subunit 11</fullName>
    </recommendedName>
    <alternativeName>
        <fullName>26S proteasome regulatory subunit RPN6</fullName>
    </alternativeName>
    <alternativeName>
        <fullName>26S proteasome regulatory subunit S9</fullName>
    </alternativeName>
    <alternativeName>
        <fullName>26S proteasome regulatory subunit p44.5</fullName>
    </alternativeName>
</protein>
<proteinExistence type="evidence at protein level"/>
<reference key="1">
    <citation type="journal article" date="1997" name="FEBS Lett.">
        <title>Molecular cloning and expression of subunit 9 of the 26S proteasome.</title>
        <authorList>
            <person name="Hoffman L."/>
            <person name="Rechsteiner M."/>
        </authorList>
    </citation>
    <scope>NUCLEOTIDE SEQUENCE [MRNA] (ISOFORM 1)</scope>
    <scope>PARTIAL PROTEIN SEQUENCE</scope>
</reference>
<reference key="2">
    <citation type="journal article" date="1997" name="Gene">
        <title>cDNA cloning and functional analysis of p44.5 and p55, two regulatory subunits of the 26S proteasome.</title>
        <authorList>
            <person name="Saito A."/>
            <person name="Watanabe T.K."/>
            <person name="Shimada Y."/>
            <person name="Fujiwara T."/>
            <person name="Slaughter C.A."/>
            <person name="DeMartino G.N."/>
            <person name="Tanahashi N."/>
            <person name="Tanaka K."/>
        </authorList>
    </citation>
    <scope>NUCLEOTIDE SEQUENCE [MRNA] (ISOFORM 1)</scope>
</reference>
<reference key="3">
    <citation type="journal article" date="2004" name="Nat. Genet.">
        <title>Complete sequencing and characterization of 21,243 full-length human cDNAs.</title>
        <authorList>
            <person name="Ota T."/>
            <person name="Suzuki Y."/>
            <person name="Nishikawa T."/>
            <person name="Otsuki T."/>
            <person name="Sugiyama T."/>
            <person name="Irie R."/>
            <person name="Wakamatsu A."/>
            <person name="Hayashi K."/>
            <person name="Sato H."/>
            <person name="Nagai K."/>
            <person name="Kimura K."/>
            <person name="Makita H."/>
            <person name="Sekine M."/>
            <person name="Obayashi M."/>
            <person name="Nishi T."/>
            <person name="Shibahara T."/>
            <person name="Tanaka T."/>
            <person name="Ishii S."/>
            <person name="Yamamoto J."/>
            <person name="Saito K."/>
            <person name="Kawai Y."/>
            <person name="Isono Y."/>
            <person name="Nakamura Y."/>
            <person name="Nagahari K."/>
            <person name="Murakami K."/>
            <person name="Yasuda T."/>
            <person name="Iwayanagi T."/>
            <person name="Wagatsuma M."/>
            <person name="Shiratori A."/>
            <person name="Sudo H."/>
            <person name="Hosoiri T."/>
            <person name="Kaku Y."/>
            <person name="Kodaira H."/>
            <person name="Kondo H."/>
            <person name="Sugawara M."/>
            <person name="Takahashi M."/>
            <person name="Kanda K."/>
            <person name="Yokoi T."/>
            <person name="Furuya T."/>
            <person name="Kikkawa E."/>
            <person name="Omura Y."/>
            <person name="Abe K."/>
            <person name="Kamihara K."/>
            <person name="Katsuta N."/>
            <person name="Sato K."/>
            <person name="Tanikawa M."/>
            <person name="Yamazaki M."/>
            <person name="Ninomiya K."/>
            <person name="Ishibashi T."/>
            <person name="Yamashita H."/>
            <person name="Murakawa K."/>
            <person name="Fujimori K."/>
            <person name="Tanai H."/>
            <person name="Kimata M."/>
            <person name="Watanabe M."/>
            <person name="Hiraoka S."/>
            <person name="Chiba Y."/>
            <person name="Ishida S."/>
            <person name="Ono Y."/>
            <person name="Takiguchi S."/>
            <person name="Watanabe S."/>
            <person name="Yosida M."/>
            <person name="Hotuta T."/>
            <person name="Kusano J."/>
            <person name="Kanehori K."/>
            <person name="Takahashi-Fujii A."/>
            <person name="Hara H."/>
            <person name="Tanase T.-O."/>
            <person name="Nomura Y."/>
            <person name="Togiya S."/>
            <person name="Komai F."/>
            <person name="Hara R."/>
            <person name="Takeuchi K."/>
            <person name="Arita M."/>
            <person name="Imose N."/>
            <person name="Musashino K."/>
            <person name="Yuuki H."/>
            <person name="Oshima A."/>
            <person name="Sasaki N."/>
            <person name="Aotsuka S."/>
            <person name="Yoshikawa Y."/>
            <person name="Matsunawa H."/>
            <person name="Ichihara T."/>
            <person name="Shiohata N."/>
            <person name="Sano S."/>
            <person name="Moriya S."/>
            <person name="Momiyama H."/>
            <person name="Satoh N."/>
            <person name="Takami S."/>
            <person name="Terashima Y."/>
            <person name="Suzuki O."/>
            <person name="Nakagawa S."/>
            <person name="Senoh A."/>
            <person name="Mizoguchi H."/>
            <person name="Goto Y."/>
            <person name="Shimizu F."/>
            <person name="Wakebe H."/>
            <person name="Hishigaki H."/>
            <person name="Watanabe T."/>
            <person name="Sugiyama A."/>
            <person name="Takemoto M."/>
            <person name="Kawakami B."/>
            <person name="Yamazaki M."/>
            <person name="Watanabe K."/>
            <person name="Kumagai A."/>
            <person name="Itakura S."/>
            <person name="Fukuzumi Y."/>
            <person name="Fujimori Y."/>
            <person name="Komiyama M."/>
            <person name="Tashiro H."/>
            <person name="Tanigami A."/>
            <person name="Fujiwara T."/>
            <person name="Ono T."/>
            <person name="Yamada K."/>
            <person name="Fujii Y."/>
            <person name="Ozaki K."/>
            <person name="Hirao M."/>
            <person name="Ohmori Y."/>
            <person name="Kawabata A."/>
            <person name="Hikiji T."/>
            <person name="Kobatake N."/>
            <person name="Inagaki H."/>
            <person name="Ikema Y."/>
            <person name="Okamoto S."/>
            <person name="Okitani R."/>
            <person name="Kawakami T."/>
            <person name="Noguchi S."/>
            <person name="Itoh T."/>
            <person name="Shigeta K."/>
            <person name="Senba T."/>
            <person name="Matsumura K."/>
            <person name="Nakajima Y."/>
            <person name="Mizuno T."/>
            <person name="Morinaga M."/>
            <person name="Sasaki M."/>
            <person name="Togashi T."/>
            <person name="Oyama M."/>
            <person name="Hata H."/>
            <person name="Watanabe M."/>
            <person name="Komatsu T."/>
            <person name="Mizushima-Sugano J."/>
            <person name="Satoh T."/>
            <person name="Shirai Y."/>
            <person name="Takahashi Y."/>
            <person name="Nakagawa K."/>
            <person name="Okumura K."/>
            <person name="Nagase T."/>
            <person name="Nomura N."/>
            <person name="Kikuchi H."/>
            <person name="Masuho Y."/>
            <person name="Yamashita R."/>
            <person name="Nakai K."/>
            <person name="Yada T."/>
            <person name="Nakamura Y."/>
            <person name="Ohara O."/>
            <person name="Isogai T."/>
            <person name="Sugano S."/>
        </authorList>
    </citation>
    <scope>NUCLEOTIDE SEQUENCE [LARGE SCALE MRNA] (ISOFORM 1)</scope>
    <source>
        <tissue>Heart</tissue>
    </source>
</reference>
<reference key="4">
    <citation type="submission" date="2005-04" db="EMBL/GenBank/DDBJ databases">
        <authorList>
            <person name="Suzuki Y."/>
            <person name="Sugano S."/>
            <person name="Totoki Y."/>
            <person name="Toyoda A."/>
            <person name="Takeda T."/>
            <person name="Sakaki Y."/>
            <person name="Tanaka A."/>
            <person name="Yokoyama S."/>
        </authorList>
    </citation>
    <scope>NUCLEOTIDE SEQUENCE [LARGE SCALE MRNA] (ISOFORM 2)</scope>
    <source>
        <tissue>Pancreas</tissue>
    </source>
</reference>
<reference key="5">
    <citation type="submission" date="2005-09" db="EMBL/GenBank/DDBJ databases">
        <authorList>
            <person name="Mural R.J."/>
            <person name="Istrail S."/>
            <person name="Sutton G.G."/>
            <person name="Florea L."/>
            <person name="Halpern A.L."/>
            <person name="Mobarry C.M."/>
            <person name="Lippert R."/>
            <person name="Walenz B."/>
            <person name="Shatkay H."/>
            <person name="Dew I."/>
            <person name="Miller J.R."/>
            <person name="Flanigan M.J."/>
            <person name="Edwards N.J."/>
            <person name="Bolanos R."/>
            <person name="Fasulo D."/>
            <person name="Halldorsson B.V."/>
            <person name="Hannenhalli S."/>
            <person name="Turner R."/>
            <person name="Yooseph S."/>
            <person name="Lu F."/>
            <person name="Nusskern D.R."/>
            <person name="Shue B.C."/>
            <person name="Zheng X.H."/>
            <person name="Zhong F."/>
            <person name="Delcher A.L."/>
            <person name="Huson D.H."/>
            <person name="Kravitz S.A."/>
            <person name="Mouchard L."/>
            <person name="Reinert K."/>
            <person name="Remington K.A."/>
            <person name="Clark A.G."/>
            <person name="Waterman M.S."/>
            <person name="Eichler E.E."/>
            <person name="Adams M.D."/>
            <person name="Hunkapiller M.W."/>
            <person name="Myers E.W."/>
            <person name="Venter J.C."/>
        </authorList>
    </citation>
    <scope>NUCLEOTIDE SEQUENCE [LARGE SCALE GENOMIC DNA]</scope>
</reference>
<reference key="6">
    <citation type="journal article" date="2004" name="Genome Res.">
        <title>The status, quality, and expansion of the NIH full-length cDNA project: the Mammalian Gene Collection (MGC).</title>
        <authorList>
            <consortium name="The MGC Project Team"/>
        </authorList>
    </citation>
    <scope>NUCLEOTIDE SEQUENCE [LARGE SCALE MRNA] (ISOFORM 1)</scope>
    <source>
        <tissue>Lung</tissue>
    </source>
</reference>
<reference key="7">
    <citation type="journal article" date="2003" name="Nat. Biotechnol.">
        <title>Exploring proteomes and analyzing protein processing by mass spectrometric identification of sorted N-terminal peptides.</title>
        <authorList>
            <person name="Gevaert K."/>
            <person name="Goethals M."/>
            <person name="Martens L."/>
            <person name="Van Damme J."/>
            <person name="Staes A."/>
            <person name="Thomas G.R."/>
            <person name="Vandekerckhove J."/>
        </authorList>
    </citation>
    <scope>PROTEIN SEQUENCE OF 2-11</scope>
    <source>
        <tissue>Platelet</tissue>
    </source>
</reference>
<reference key="8">
    <citation type="submission" date="2004-07" db="UniProtKB">
        <authorList>
            <person name="Bienvenut W.V."/>
            <person name="Potts A."/>
            <person name="Brablan J."/>
            <person name="Quadroni M."/>
        </authorList>
    </citation>
    <scope>PROTEIN SEQUENCE OF 2-11</scope>
    <scope>ACETYLATION AT ALA-2</scope>
    <scope>IDENTIFICATION BY MASS SPECTROMETRY</scope>
    <source>
        <tissue>B-cell lymphoma</tissue>
    </source>
</reference>
<reference key="9">
    <citation type="journal article" date="1992" name="Eur. J. Biochem.">
        <title>Demonstration that a human 26S proteolytic complex consists of a proteasome and multiple associated protein components and hydrolyzes ATP and ubiquitin-ligated proteins by closely linked mechanisms.</title>
        <authorList>
            <person name="Kanayama H.O."/>
            <person name="Tamura T."/>
            <person name="Ugai S."/>
            <person name="Kagawa S."/>
            <person name="Tanahashi N."/>
            <person name="Yoshimura T."/>
            <person name="Tanaka K."/>
            <person name="Ichihara A."/>
        </authorList>
    </citation>
    <scope>FUNCTION</scope>
</reference>
<reference key="10">
    <citation type="journal article" date="2007" name="Biochemistry">
        <title>Mass spectrometric characterization of the affinity-purified human 26S proteasome complex.</title>
        <authorList>
            <person name="Wang X."/>
            <person name="Chen C.-F."/>
            <person name="Baker P.R."/>
            <person name="Chen P.-L."/>
            <person name="Kaiser P."/>
            <person name="Huang L."/>
        </authorList>
    </citation>
    <scope>PHOSPHORYLATION [LARGE SCALE ANALYSIS] AT SER-14</scope>
    <scope>IDENTIFICATION BY MASS SPECTROMETRY [LARGE SCALE ANALYSIS]</scope>
    <source>
        <tissue>Embryonic kidney</tissue>
    </source>
</reference>
<reference key="11">
    <citation type="journal article" date="2008" name="Proc. Natl. Acad. Sci. U.S.A.">
        <title>A quantitative atlas of mitotic phosphorylation.</title>
        <authorList>
            <person name="Dephoure N."/>
            <person name="Zhou C."/>
            <person name="Villen J."/>
            <person name="Beausoleil S.A."/>
            <person name="Bakalarski C.E."/>
            <person name="Elledge S.J."/>
            <person name="Gygi S.P."/>
        </authorList>
    </citation>
    <scope>PHOSPHORYLATION [LARGE SCALE ANALYSIS] AT SER-14</scope>
    <scope>IDENTIFICATION BY MASS SPECTROMETRY [LARGE SCALE ANALYSIS]</scope>
    <source>
        <tissue>Cervix carcinoma</tissue>
    </source>
</reference>
<reference key="12">
    <citation type="journal article" date="2009" name="Anal. Chem.">
        <title>Lys-N and trypsin cover complementary parts of the phosphoproteome in a refined SCX-based approach.</title>
        <authorList>
            <person name="Gauci S."/>
            <person name="Helbig A.O."/>
            <person name="Slijper M."/>
            <person name="Krijgsveld J."/>
            <person name="Heck A.J."/>
            <person name="Mohammed S."/>
        </authorList>
    </citation>
    <scope>ACETYLATION [LARGE SCALE ANALYSIS] AT ALA-2</scope>
    <scope>CLEAVAGE OF INITIATOR METHIONINE [LARGE SCALE ANALYSIS]</scope>
    <scope>IDENTIFICATION BY MASS SPECTROMETRY [LARGE SCALE ANALYSIS]</scope>
</reference>
<reference key="13">
    <citation type="journal article" date="2009" name="Int. J. Biochem. Cell Biol.">
        <title>Two-hybrid analysis identifies PSMD11, a non-ATPase subunit of the proteasome, as a novel interaction partner of AMP-activated protein kinase.</title>
        <authorList>
            <person name="Moreno D."/>
            <person name="Viana R."/>
            <person name="Sanz P."/>
        </authorList>
    </citation>
    <scope>PHOSPHORYLATION</scope>
    <scope>MUTAGENESIS OF SER-14; SER-79 AND SER-272</scope>
</reference>
<reference key="14">
    <citation type="journal article" date="2011" name="BMC Syst. Biol.">
        <title>Initial characterization of the human central proteome.</title>
        <authorList>
            <person name="Burkard T.R."/>
            <person name="Planyavsky M."/>
            <person name="Kaupe I."/>
            <person name="Breitwieser F.P."/>
            <person name="Buerckstuemmer T."/>
            <person name="Bennett K.L."/>
            <person name="Superti-Furga G."/>
            <person name="Colinge J."/>
        </authorList>
    </citation>
    <scope>IDENTIFICATION BY MASS SPECTROMETRY [LARGE SCALE ANALYSIS]</scope>
</reference>
<reference key="15">
    <citation type="journal article" date="2012" name="Mol. Cell. Proteomics">
        <title>Comparative large-scale characterisation of plant vs. mammal proteins reveals similar and idiosyncratic N-alpha acetylation features.</title>
        <authorList>
            <person name="Bienvenut W.V."/>
            <person name="Sumpton D."/>
            <person name="Martinez A."/>
            <person name="Lilla S."/>
            <person name="Espagne C."/>
            <person name="Meinnel T."/>
            <person name="Giglione C."/>
        </authorList>
    </citation>
    <scope>ACETYLATION [LARGE SCALE ANALYSIS] AT ALA-2</scope>
    <scope>CLEAVAGE OF INITIATOR METHIONINE [LARGE SCALE ANALYSIS]</scope>
    <scope>IDENTIFICATION BY MASS SPECTROMETRY [LARGE SCALE ANALYSIS]</scope>
</reference>
<reference key="16">
    <citation type="journal article" date="2012" name="Nature">
        <title>Increased proteasome activity in human embryonic stem cells is regulated by PSMD11.</title>
        <authorList>
            <person name="Vilchez D."/>
            <person name="Boyer L."/>
            <person name="Morantte I."/>
            <person name="Lutz M."/>
            <person name="Merkwirth C."/>
            <person name="Joyce D."/>
            <person name="Spencer B."/>
            <person name="Page L."/>
            <person name="Masliah E."/>
            <person name="Berggren W.T."/>
            <person name="Gage F.H."/>
            <person name="Dillin A."/>
        </authorList>
    </citation>
    <scope>FUNCTION</scope>
    <scope>IDENTIFICATION IN THE 19S PROTEASOME REGULATORY COMPLEX</scope>
    <scope>TISSUE SPECIFICITY</scope>
    <scope>INDUCTION</scope>
</reference>
<reference key="17">
    <citation type="journal article" date="2012" name="Proc. Natl. Acad. Sci. U.S.A.">
        <title>N-terminal acetylome analyses and functional insights of the N-terminal acetyltransferase NatB.</title>
        <authorList>
            <person name="Van Damme P."/>
            <person name="Lasa M."/>
            <person name="Polevoda B."/>
            <person name="Gazquez C."/>
            <person name="Elosegui-Artola A."/>
            <person name="Kim D.S."/>
            <person name="De Juan-Pardo E."/>
            <person name="Demeyer K."/>
            <person name="Hole K."/>
            <person name="Larrea E."/>
            <person name="Timmerman E."/>
            <person name="Prieto J."/>
            <person name="Arnesen T."/>
            <person name="Sherman F."/>
            <person name="Gevaert K."/>
            <person name="Aldabe R."/>
        </authorList>
    </citation>
    <scope>ACETYLATION [LARGE SCALE ANALYSIS] AT ALA-2</scope>
    <scope>CLEAVAGE OF INITIATOR METHIONINE [LARGE SCALE ANALYSIS]</scope>
    <scope>IDENTIFICATION BY MASS SPECTROMETRY [LARGE SCALE ANALYSIS]</scope>
</reference>
<reference key="18">
    <citation type="journal article" date="2013" name="J. Proteome Res.">
        <title>Toward a comprehensive characterization of a human cancer cell phosphoproteome.</title>
        <authorList>
            <person name="Zhou H."/>
            <person name="Di Palma S."/>
            <person name="Preisinger C."/>
            <person name="Peng M."/>
            <person name="Polat A.N."/>
            <person name="Heck A.J."/>
            <person name="Mohammed S."/>
        </authorList>
    </citation>
    <scope>PHOSPHORYLATION [LARGE SCALE ANALYSIS] AT SER-14 AND SER-23</scope>
    <scope>IDENTIFICATION BY MASS SPECTROMETRY [LARGE SCALE ANALYSIS]</scope>
    <source>
        <tissue>Erythroleukemia</tissue>
    </source>
</reference>
<reference key="19">
    <citation type="journal article" date="2014" name="J. Proteomics">
        <title>An enzyme assisted RP-RPLC approach for in-depth analysis of human liver phosphoproteome.</title>
        <authorList>
            <person name="Bian Y."/>
            <person name="Song C."/>
            <person name="Cheng K."/>
            <person name="Dong M."/>
            <person name="Wang F."/>
            <person name="Huang J."/>
            <person name="Sun D."/>
            <person name="Wang L."/>
            <person name="Ye M."/>
            <person name="Zou H."/>
        </authorList>
    </citation>
    <scope>PHOSPHORYLATION [LARGE SCALE ANALYSIS] AT SER-14</scope>
    <scope>IDENTIFICATION BY MASS SPECTROMETRY [LARGE SCALE ANALYSIS]</scope>
    <source>
        <tissue>Liver</tissue>
    </source>
</reference>
<reference key="20">
    <citation type="journal article" date="2015" name="Cell Rep.">
        <title>SUMO-2 orchestrates chromatin modifiers in response to DNA damage.</title>
        <authorList>
            <person name="Hendriks I.A."/>
            <person name="Treffers L.W."/>
            <person name="Verlaan-de Vries M."/>
            <person name="Olsen J.V."/>
            <person name="Vertegaal A.C."/>
        </authorList>
    </citation>
    <scope>SUMOYLATION [LARGE SCALE ANALYSIS] AT LYS-274</scope>
    <scope>IDENTIFICATION BY MASS SPECTROMETRY [LARGE SCALE ANALYSIS]</scope>
</reference>
<reference key="21">
    <citation type="journal article" date="2017" name="Nat. Struct. Mol. Biol.">
        <title>Site-specific mapping of the human SUMO proteome reveals co-modification with phosphorylation.</title>
        <authorList>
            <person name="Hendriks I.A."/>
            <person name="Lyon D."/>
            <person name="Young C."/>
            <person name="Jensen L.J."/>
            <person name="Vertegaal A.C."/>
            <person name="Nielsen M.L."/>
        </authorList>
    </citation>
    <scope>SUMOYLATION [LARGE SCALE ANALYSIS] AT LYS-274</scope>
    <scope>IDENTIFICATION BY MASS SPECTROMETRY [LARGE SCALE ANALYSIS]</scope>
</reference>
<reference key="22">
    <citation type="journal article" date="2016" name="Nat. Struct. Mol. Biol.">
        <title>An atomic structure of the human 26S proteasome.</title>
        <authorList>
            <person name="Huang X."/>
            <person name="Luan B."/>
            <person name="Wu J."/>
            <person name="Shi Y."/>
        </authorList>
    </citation>
    <scope>STRUCTURE BY ELECTRON MICROSCOPY (3.50 ANGSTROMS)</scope>
    <scope>SUBUNIT</scope>
</reference>
<reference key="23">
    <citation type="journal article" date="2016" name="Proc. Natl. Acad. Sci. U.S.A.">
        <title>Structure of the human 26S proteasome at a resolution of 3.9 Aa.</title>
        <authorList>
            <person name="Schweitzer A."/>
            <person name="Aufderheide A."/>
            <person name="Rudack T."/>
            <person name="Beck F."/>
            <person name="Pfeifer G."/>
            <person name="Plitzko J.M."/>
            <person name="Sakata E."/>
            <person name="Schulten K."/>
            <person name="Foerster F."/>
            <person name="Baumeister W."/>
        </authorList>
    </citation>
    <scope>STRUCTURE BY ELECTRON MICROSCOPY (4.50 ANGSTROMS)</scope>
    <scope>SUBUNIT</scope>
</reference>
<sequence>MAAAAVVEFQRAQSLLSTDREASIDILHSIVKRDIQENDEEAVQVKEQSILELGSLLAKTGQAAELGGLLKYVRPFLNSISKAKAARLVRSLLDLFLDMEAATGQEVELCLECIEWAKSEKRTFLRQALEARLVSLYFDTKRYQEALHLGSQLLRELKKMDDKALLVEVQLLESKTYHALSNLPKARAALTSARTTANAIYCPPKLQATLDMQSGIIHAAEEKDWKTAYSYFYEAFEGYDSIDSPKAITSLKYMLLCKIMLNTPEDVQALVSGKLALRYAGRQTEALKCVAQASKNRSLADFEKALTDYRAELRDDPIISTHLAKLYDNLLEQNLIRVIEPFSRVQIEHISSLIKLSKADVERKLSQMILDKKFHGILDQGEGVLIIFDEPPVDKTYEAALETIQNMSKVVDSLYNKAKKLT</sequence>
<organism>
    <name type="scientific">Homo sapiens</name>
    <name type="common">Human</name>
    <dbReference type="NCBI Taxonomy" id="9606"/>
    <lineage>
        <taxon>Eukaryota</taxon>
        <taxon>Metazoa</taxon>
        <taxon>Chordata</taxon>
        <taxon>Craniata</taxon>
        <taxon>Vertebrata</taxon>
        <taxon>Euteleostomi</taxon>
        <taxon>Mammalia</taxon>
        <taxon>Eutheria</taxon>
        <taxon>Euarchontoglires</taxon>
        <taxon>Primates</taxon>
        <taxon>Haplorrhini</taxon>
        <taxon>Catarrhini</taxon>
        <taxon>Hominidae</taxon>
        <taxon>Homo</taxon>
    </lineage>
</organism>
<evidence type="ECO:0000250" key="1"/>
<evidence type="ECO:0000255" key="2">
    <source>
        <dbReference type="PROSITE-ProRule" id="PRU01185"/>
    </source>
</evidence>
<evidence type="ECO:0000269" key="3">
    <source>
    </source>
</evidence>
<evidence type="ECO:0000269" key="4">
    <source>
    </source>
</evidence>
<evidence type="ECO:0000269" key="5">
    <source>
    </source>
</evidence>
<evidence type="ECO:0000269" key="6">
    <source>
    </source>
</evidence>
<evidence type="ECO:0000269" key="7">
    <source>
    </source>
</evidence>
<evidence type="ECO:0000269" key="8">
    <source>
    </source>
</evidence>
<evidence type="ECO:0000269" key="9">
    <source ref="8"/>
</evidence>
<evidence type="ECO:0000303" key="10">
    <source ref="4"/>
</evidence>
<evidence type="ECO:0000305" key="11"/>
<evidence type="ECO:0007744" key="12">
    <source>
    </source>
</evidence>
<evidence type="ECO:0007744" key="13">
    <source>
    </source>
</evidence>
<evidence type="ECO:0007744" key="14">
    <source>
    </source>
</evidence>
<evidence type="ECO:0007744" key="15">
    <source>
    </source>
</evidence>
<evidence type="ECO:0007744" key="16">
    <source>
    </source>
</evidence>
<evidence type="ECO:0007744" key="17">
    <source>
    </source>
</evidence>
<evidence type="ECO:0007744" key="18">
    <source>
    </source>
</evidence>
<evidence type="ECO:0007744" key="19">
    <source>
    </source>
</evidence>
<evidence type="ECO:0007744" key="20">
    <source>
    </source>
</evidence>
<evidence type="ECO:0007829" key="21">
    <source>
        <dbReference type="PDB" id="9E8J"/>
    </source>
</evidence>
<accession>O00231</accession>
<accession>A8K3I7</accession>
<accession>E1P663</accession>
<accession>O00495</accession>
<accession>Q53FT5</accession>